<keyword id="KW-1185">Reference proteome</keyword>
<proteinExistence type="inferred from homology"/>
<evidence type="ECO:0000255" key="1">
    <source>
        <dbReference type="HAMAP-Rule" id="MF_01079"/>
    </source>
</evidence>
<reference key="1">
    <citation type="journal article" date="2006" name="Science">
        <title>Genome of rice cluster I archaea -- the key methane producers in the rice rhizosphere.</title>
        <authorList>
            <person name="Erkel C."/>
            <person name="Kube M."/>
            <person name="Reinhardt R."/>
            <person name="Liesack W."/>
        </authorList>
    </citation>
    <scope>NUCLEOTIDE SEQUENCE [LARGE SCALE GENOMIC DNA]</scope>
    <source>
        <strain>DSM 22066 / NBRC 105507 / MRE50</strain>
    </source>
</reference>
<protein>
    <recommendedName>
        <fullName evidence="1">UPF0280 protein UNCMA_16740</fullName>
    </recommendedName>
</protein>
<gene>
    <name type="ordered locus">UNCMA_16740</name>
    <name type="ORF">RCIX1245</name>
</gene>
<sequence length="245" mass="25685">MQTPSVFMRKTAKYQIRETIITVIADEPYHPVCLDTIYRVRGELEAFIARDPYFQSTLEPYECPADAPDVVRRMCAATAKAGVGPMAAVAGTIGCMAVEAMAAAGAKYALVDNGGDIALVNDEPVVVGIYAGESPIKGLGLEIPPRDTILGVCTSSATVGPSISFGNSDAALVISDDVSLADAAATALGNRIVDVASLATAFDFLKEIPEVTGAVGIIGDKMATYGRLPKIVRAHVDYEKITKGD</sequence>
<organism>
    <name type="scientific">Methanocella arvoryzae (strain DSM 22066 / NBRC 105507 / MRE50)</name>
    <dbReference type="NCBI Taxonomy" id="351160"/>
    <lineage>
        <taxon>Archaea</taxon>
        <taxon>Methanobacteriati</taxon>
        <taxon>Methanobacteriota</taxon>
        <taxon>Stenosarchaea group</taxon>
        <taxon>Methanomicrobia</taxon>
        <taxon>Methanocellales</taxon>
        <taxon>Methanocellaceae</taxon>
        <taxon>Methanocella</taxon>
    </lineage>
</organism>
<comment type="similarity">
    <text evidence="1">Belongs to the UPF0280 family.</text>
</comment>
<feature type="chain" id="PRO_0000366713" description="UPF0280 protein UNCMA_16740">
    <location>
        <begin position="1"/>
        <end position="245"/>
    </location>
</feature>
<dbReference type="EMBL" id="AM114193">
    <property type="protein sequence ID" value="CAJ36545.1"/>
    <property type="molecule type" value="Genomic_DNA"/>
</dbReference>
<dbReference type="SMR" id="Q0W4Z8"/>
<dbReference type="STRING" id="351160.RCIX1245"/>
<dbReference type="KEGG" id="rci:RCIX1245"/>
<dbReference type="eggNOG" id="arCOG04376">
    <property type="taxonomic scope" value="Archaea"/>
</dbReference>
<dbReference type="OrthoDB" id="50299at2157"/>
<dbReference type="Proteomes" id="UP000000663">
    <property type="component" value="Chromosome"/>
</dbReference>
<dbReference type="Gene3D" id="3.10.520.10">
    <property type="entry name" value="ApbE-like domains"/>
    <property type="match status" value="1"/>
</dbReference>
<dbReference type="HAMAP" id="MF_01079">
    <property type="entry name" value="UPF0280"/>
    <property type="match status" value="1"/>
</dbReference>
<dbReference type="InterPro" id="IPR003374">
    <property type="entry name" value="ApbE-like_sf"/>
</dbReference>
<dbReference type="InterPro" id="IPR037456">
    <property type="entry name" value="MA1715-like"/>
</dbReference>
<dbReference type="InterPro" id="IPR007183">
    <property type="entry name" value="UPF0280"/>
</dbReference>
<dbReference type="NCBIfam" id="NF003324">
    <property type="entry name" value="PRK04334.1-4"/>
    <property type="match status" value="1"/>
</dbReference>
<dbReference type="PIRSF" id="PIRSF006421">
    <property type="entry name" value="UCP006421"/>
    <property type="match status" value="1"/>
</dbReference>
<dbReference type="SUPFAM" id="SSF143631">
    <property type="entry name" value="ApbE-like"/>
    <property type="match status" value="1"/>
</dbReference>
<name>Y1674_METAR</name>
<accession>Q0W4Z8</accession>